<sequence length="507" mass="55057">MELSPRAAELTNLFESRIRNFYANFQVDEIGRVVSVGDGIAQVYGLNEIQAGEMVLFANGVKGMALNLENENVGIVVFGGDTAIKEGDLVKRTGSIVDVPAGKAMLGRVVDAMGVPIDGRGALSDHEQRRVEVKAPGILERKSVHEPMQTGLKAVDSLVPIGRGQRELLIGDRQTGKTTIAIDTILNQKQINSRATSESETMYCVYVAIGQKRSTVGQLIQTLEEANALEYSILVAATASDPAPLQFLAPYSGCAMGEYFRDNGMHALIIYDDLSKQAVAYRQMSLLLRRPPGREAFPGDVFYLHSRLLERAAKRSDQTGAGSLTALPVIETQAGDVSAYIPTNVISITDGQICLETELFYRGIRPAINVGLSVSRVGSAAQLKAMKQVCGSSKLELAQYREVAAFAQFGSDLDAATQALLNRGARLTEVPKQPQYAPLPIEKQILVIYAAVNGFCDRMPLDRISQYEKAIPNSVKPELLQALKGGLTNERKMEPDAFLKERALALI</sequence>
<geneLocation type="mitochondrion"/>
<evidence type="ECO:0000250" key="1"/>
<evidence type="ECO:0000305" key="2"/>
<keyword id="KW-0066">ATP synthesis</keyword>
<keyword id="KW-0067">ATP-binding</keyword>
<keyword id="KW-0139">CF(1)</keyword>
<keyword id="KW-0375">Hydrogen ion transport</keyword>
<keyword id="KW-0406">Ion transport</keyword>
<keyword id="KW-0472">Membrane</keyword>
<keyword id="KW-0496">Mitochondrion</keyword>
<keyword id="KW-0999">Mitochondrion inner membrane</keyword>
<keyword id="KW-0547">Nucleotide-binding</keyword>
<keyword id="KW-1185">Reference proteome</keyword>
<keyword id="KW-0813">Transport</keyword>
<feature type="chain" id="PRO_0000144407" description="ATP synthase subunit alpha, mitochondrial">
    <location>
        <begin position="1"/>
        <end position="507"/>
    </location>
</feature>
<feature type="binding site" evidence="1">
    <location>
        <begin position="171"/>
        <end position="178"/>
    </location>
    <ligand>
        <name>ATP</name>
        <dbReference type="ChEBI" id="CHEBI:30616"/>
    </ligand>
</feature>
<feature type="site" description="Required for activity" evidence="1">
    <location>
        <position position="373"/>
    </location>
</feature>
<protein>
    <recommendedName>
        <fullName>ATP synthase subunit alpha, mitochondrial</fullName>
    </recommendedName>
</protein>
<comment type="function">
    <text evidence="1">Mitochondrial membrane ATP synthase (F(1)F(0) ATP synthase or Complex V) produces ATP from ADP in the presence of a proton gradient across the membrane which is generated by electron transport complexes of the respiratory chain. F-type ATPases consist of two structural domains, F(1) - containing the extramembraneous catalytic core, and F(0) - containing the membrane proton channel, linked together by a central stalk and a peripheral stalk. During catalysis, ATP synthesis in the catalytic domain of F(1) is coupled via a rotary mechanism of the central stalk subunits to proton translocation. Subunits alpha and beta form the catalytic core in F(1). Rotation of the central stalk against the surrounding alpha(3)beta(3) subunits leads to hydrolysis of ATP in three separate catalytic sites on the beta subunits. Subunit alpha does not bear the catalytic high-affinity ATP-binding sites (By similarity).</text>
</comment>
<comment type="subunit">
    <text>F-type ATPases have 2 components, CF(1) - the catalytic core - and CF(0) - the membrane proton channel. CF(1) has five subunits: alpha(3), beta(3), gamma(1), delta(1), epsilon(1). CF(0) has three main subunits: a, b and c.</text>
</comment>
<comment type="subcellular location">
    <subcellularLocation>
        <location>Mitochondrion</location>
    </subcellularLocation>
    <subcellularLocation>
        <location>Mitochondrion inner membrane</location>
    </subcellularLocation>
    <text>Peripheral membrane protein.</text>
</comment>
<comment type="similarity">
    <text evidence="2">Belongs to the ATPase alpha/beta chains family.</text>
</comment>
<gene>
    <name type="primary">ATPA</name>
</gene>
<organism>
    <name type="scientific">Raphanus sativus</name>
    <name type="common">Radish</name>
    <name type="synonym">Raphanus raphanistrum var. sativus</name>
    <dbReference type="NCBI Taxonomy" id="3726"/>
    <lineage>
        <taxon>Eukaryota</taxon>
        <taxon>Viridiplantae</taxon>
        <taxon>Streptophyta</taxon>
        <taxon>Embryophyta</taxon>
        <taxon>Tracheophyta</taxon>
        <taxon>Spermatophyta</taxon>
        <taxon>Magnoliopsida</taxon>
        <taxon>eudicotyledons</taxon>
        <taxon>Gunneridae</taxon>
        <taxon>Pentapetalae</taxon>
        <taxon>rosids</taxon>
        <taxon>malvids</taxon>
        <taxon>Brassicales</taxon>
        <taxon>Brassicaceae</taxon>
        <taxon>Brassiceae</taxon>
        <taxon>Raphanus</taxon>
    </lineage>
</organism>
<proteinExistence type="inferred from homology"/>
<dbReference type="PIR" id="S12309">
    <property type="entry name" value="S12309"/>
</dbReference>
<dbReference type="SMR" id="P68541"/>
<dbReference type="KEGG" id="rsz:13630159"/>
<dbReference type="OrthoDB" id="1104282at2759"/>
<dbReference type="Proteomes" id="UP000504610">
    <property type="component" value="Unplaced"/>
</dbReference>
<dbReference type="GO" id="GO:0005743">
    <property type="term" value="C:mitochondrial inner membrane"/>
    <property type="evidence" value="ECO:0007669"/>
    <property type="project" value="UniProtKB-SubCell"/>
</dbReference>
<dbReference type="GO" id="GO:0045259">
    <property type="term" value="C:proton-transporting ATP synthase complex"/>
    <property type="evidence" value="ECO:0007669"/>
    <property type="project" value="UniProtKB-KW"/>
</dbReference>
<dbReference type="GO" id="GO:0043531">
    <property type="term" value="F:ADP binding"/>
    <property type="evidence" value="ECO:0007669"/>
    <property type="project" value="TreeGrafter"/>
</dbReference>
<dbReference type="GO" id="GO:0005524">
    <property type="term" value="F:ATP binding"/>
    <property type="evidence" value="ECO:0007669"/>
    <property type="project" value="UniProtKB-KW"/>
</dbReference>
<dbReference type="GO" id="GO:0046933">
    <property type="term" value="F:proton-transporting ATP synthase activity, rotational mechanism"/>
    <property type="evidence" value="ECO:0007669"/>
    <property type="project" value="InterPro"/>
</dbReference>
<dbReference type="CDD" id="cd18113">
    <property type="entry name" value="ATP-synt_F1_alpha_C"/>
    <property type="match status" value="1"/>
</dbReference>
<dbReference type="CDD" id="cd18116">
    <property type="entry name" value="ATP-synt_F1_alpha_N"/>
    <property type="match status" value="1"/>
</dbReference>
<dbReference type="CDD" id="cd01132">
    <property type="entry name" value="F1-ATPase_alpha_CD"/>
    <property type="match status" value="1"/>
</dbReference>
<dbReference type="FunFam" id="1.20.150.20:FF:000001">
    <property type="entry name" value="ATP synthase subunit alpha"/>
    <property type="match status" value="1"/>
</dbReference>
<dbReference type="FunFam" id="2.40.30.20:FF:000001">
    <property type="entry name" value="ATP synthase subunit alpha"/>
    <property type="match status" value="1"/>
</dbReference>
<dbReference type="FunFam" id="3.40.50.300:FF:002432">
    <property type="entry name" value="ATP synthase subunit alpha, mitochondrial"/>
    <property type="match status" value="1"/>
</dbReference>
<dbReference type="Gene3D" id="2.40.30.20">
    <property type="match status" value="1"/>
</dbReference>
<dbReference type="Gene3D" id="1.20.150.20">
    <property type="entry name" value="ATP synthase alpha/beta chain, C-terminal domain"/>
    <property type="match status" value="1"/>
</dbReference>
<dbReference type="Gene3D" id="3.40.50.300">
    <property type="entry name" value="P-loop containing nucleotide triphosphate hydrolases"/>
    <property type="match status" value="1"/>
</dbReference>
<dbReference type="HAMAP" id="MF_01346">
    <property type="entry name" value="ATP_synth_alpha_bact"/>
    <property type="match status" value="1"/>
</dbReference>
<dbReference type="InterPro" id="IPR023366">
    <property type="entry name" value="ATP_synth_asu-like_sf"/>
</dbReference>
<dbReference type="InterPro" id="IPR000793">
    <property type="entry name" value="ATP_synth_asu_C"/>
</dbReference>
<dbReference type="InterPro" id="IPR038376">
    <property type="entry name" value="ATP_synth_asu_C_sf"/>
</dbReference>
<dbReference type="InterPro" id="IPR033732">
    <property type="entry name" value="ATP_synth_F1_a_nt-bd_dom"/>
</dbReference>
<dbReference type="InterPro" id="IPR005294">
    <property type="entry name" value="ATP_synth_F1_asu"/>
</dbReference>
<dbReference type="InterPro" id="IPR020003">
    <property type="entry name" value="ATPase_a/bsu_AS"/>
</dbReference>
<dbReference type="InterPro" id="IPR004100">
    <property type="entry name" value="ATPase_F1/V1/A1_a/bsu_N"/>
</dbReference>
<dbReference type="InterPro" id="IPR036121">
    <property type="entry name" value="ATPase_F1/V1/A1_a/bsu_N_sf"/>
</dbReference>
<dbReference type="InterPro" id="IPR000194">
    <property type="entry name" value="ATPase_F1/V1/A1_a/bsu_nucl-bd"/>
</dbReference>
<dbReference type="InterPro" id="IPR027417">
    <property type="entry name" value="P-loop_NTPase"/>
</dbReference>
<dbReference type="NCBIfam" id="TIGR00962">
    <property type="entry name" value="atpA"/>
    <property type="match status" value="1"/>
</dbReference>
<dbReference type="NCBIfam" id="NF009884">
    <property type="entry name" value="PRK13343.1"/>
    <property type="match status" value="1"/>
</dbReference>
<dbReference type="PANTHER" id="PTHR48082">
    <property type="entry name" value="ATP SYNTHASE SUBUNIT ALPHA, MITOCHONDRIAL"/>
    <property type="match status" value="1"/>
</dbReference>
<dbReference type="PANTHER" id="PTHR48082:SF2">
    <property type="entry name" value="ATP SYNTHASE SUBUNIT ALPHA, MITOCHONDRIAL"/>
    <property type="match status" value="1"/>
</dbReference>
<dbReference type="Pfam" id="PF00006">
    <property type="entry name" value="ATP-synt_ab"/>
    <property type="match status" value="1"/>
</dbReference>
<dbReference type="Pfam" id="PF00306">
    <property type="entry name" value="ATP-synt_ab_C"/>
    <property type="match status" value="1"/>
</dbReference>
<dbReference type="Pfam" id="PF02874">
    <property type="entry name" value="ATP-synt_ab_N"/>
    <property type="match status" value="1"/>
</dbReference>
<dbReference type="PIRSF" id="PIRSF039088">
    <property type="entry name" value="F_ATPase_subunit_alpha"/>
    <property type="match status" value="1"/>
</dbReference>
<dbReference type="SUPFAM" id="SSF47917">
    <property type="entry name" value="C-terminal domain of alpha and beta subunits of F1 ATP synthase"/>
    <property type="match status" value="1"/>
</dbReference>
<dbReference type="SUPFAM" id="SSF50615">
    <property type="entry name" value="N-terminal domain of alpha and beta subunits of F1 ATP synthase"/>
    <property type="match status" value="1"/>
</dbReference>
<dbReference type="SUPFAM" id="SSF52540">
    <property type="entry name" value="P-loop containing nucleoside triphosphate hydrolases"/>
    <property type="match status" value="1"/>
</dbReference>
<dbReference type="PROSITE" id="PS00152">
    <property type="entry name" value="ATPASE_ALPHA_BETA"/>
    <property type="match status" value="1"/>
</dbReference>
<accession>P68541</accession>
<accession>P23413</accession>
<reference key="1">
    <citation type="journal article" date="1990" name="Plant Mol. Biol.">
        <title>Characterization of radish mitochondrial atpA: influence of nuclear background on transcription of atpA-associated sequences and relationship with male sterility.</title>
        <authorList>
            <person name="Makaroff C.A."/>
            <person name="Apel I.J."/>
            <person name="Palmer J.D."/>
        </authorList>
    </citation>
    <scope>NUCLEOTIDE SEQUENCE</scope>
</reference>
<name>ATPAM_RAPSA</name>